<reference key="1">
    <citation type="submission" date="2005-08" db="EMBL/GenBank/DDBJ databases">
        <title>Complete sequence of Pelodictyon luteolum DSM 273.</title>
        <authorList>
            <consortium name="US DOE Joint Genome Institute"/>
            <person name="Copeland A."/>
            <person name="Lucas S."/>
            <person name="Lapidus A."/>
            <person name="Barry K."/>
            <person name="Detter J.C."/>
            <person name="Glavina T."/>
            <person name="Hammon N."/>
            <person name="Israni S."/>
            <person name="Pitluck S."/>
            <person name="Bryant D."/>
            <person name="Schmutz J."/>
            <person name="Larimer F."/>
            <person name="Land M."/>
            <person name="Kyrpides N."/>
            <person name="Ivanova N."/>
            <person name="Richardson P."/>
        </authorList>
    </citation>
    <scope>NUCLEOTIDE SEQUENCE [LARGE SCALE GENOMIC DNA]</scope>
    <source>
        <strain>DSM 273 / BCRC 81028 / 2530</strain>
    </source>
</reference>
<organism>
    <name type="scientific">Chlorobium luteolum (strain DSM 273 / BCRC 81028 / 2530)</name>
    <name type="common">Pelodictyon luteolum</name>
    <dbReference type="NCBI Taxonomy" id="319225"/>
    <lineage>
        <taxon>Bacteria</taxon>
        <taxon>Pseudomonadati</taxon>
        <taxon>Chlorobiota</taxon>
        <taxon>Chlorobiia</taxon>
        <taxon>Chlorobiales</taxon>
        <taxon>Chlorobiaceae</taxon>
        <taxon>Chlorobium/Pelodictyon group</taxon>
        <taxon>Pelodictyon</taxon>
    </lineage>
</organism>
<name>TRMD_CHLL3</name>
<proteinExistence type="inferred from homology"/>
<sequence>MMDGIRIDVLSVIPGFFDSVLDNGLLAIARKKGYADIVVHNLHDYGLGRYRQVDDSPFGGGAGMVLRPEPVFACVEKLQSERCYDAVIFPTPDARPFLQGDANRLSRMKNLMFLCGHYKALDERVRQSLVTMEYSIGDVVLSGGEIPSLLMMDALLRVVPGVLGDSESALTDSFQTGMLDCAYYTRPPEFRGMKVPEVLLSGHHAKIEQWRQENALERTRRLRPDLLGEDVE</sequence>
<comment type="function">
    <text evidence="1">Specifically methylates guanosine-37 in various tRNAs.</text>
</comment>
<comment type="catalytic activity">
    <reaction evidence="1">
        <text>guanosine(37) in tRNA + S-adenosyl-L-methionine = N(1)-methylguanosine(37) in tRNA + S-adenosyl-L-homocysteine + H(+)</text>
        <dbReference type="Rhea" id="RHEA:36899"/>
        <dbReference type="Rhea" id="RHEA-COMP:10145"/>
        <dbReference type="Rhea" id="RHEA-COMP:10147"/>
        <dbReference type="ChEBI" id="CHEBI:15378"/>
        <dbReference type="ChEBI" id="CHEBI:57856"/>
        <dbReference type="ChEBI" id="CHEBI:59789"/>
        <dbReference type="ChEBI" id="CHEBI:73542"/>
        <dbReference type="ChEBI" id="CHEBI:74269"/>
        <dbReference type="EC" id="2.1.1.228"/>
    </reaction>
</comment>
<comment type="subunit">
    <text evidence="1">Homodimer.</text>
</comment>
<comment type="subcellular location">
    <subcellularLocation>
        <location evidence="1">Cytoplasm</location>
    </subcellularLocation>
</comment>
<comment type="similarity">
    <text evidence="1">Belongs to the RNA methyltransferase TrmD family.</text>
</comment>
<evidence type="ECO:0000255" key="1">
    <source>
        <dbReference type="HAMAP-Rule" id="MF_00605"/>
    </source>
</evidence>
<protein>
    <recommendedName>
        <fullName evidence="1">tRNA (guanine-N(1)-)-methyltransferase</fullName>
        <ecNumber evidence="1">2.1.1.228</ecNumber>
    </recommendedName>
    <alternativeName>
        <fullName evidence="1">M1G-methyltransferase</fullName>
    </alternativeName>
    <alternativeName>
        <fullName evidence="1">tRNA [GM37] methyltransferase</fullName>
    </alternativeName>
</protein>
<gene>
    <name evidence="1" type="primary">trmD</name>
    <name type="ordered locus">Plut_0968</name>
</gene>
<feature type="chain" id="PRO_0000257445" description="tRNA (guanine-N(1)-)-methyltransferase">
    <location>
        <begin position="1"/>
        <end position="232"/>
    </location>
</feature>
<feature type="binding site" evidence="1">
    <location>
        <position position="116"/>
    </location>
    <ligand>
        <name>S-adenosyl-L-methionine</name>
        <dbReference type="ChEBI" id="CHEBI:59789"/>
    </ligand>
</feature>
<keyword id="KW-0963">Cytoplasm</keyword>
<keyword id="KW-0489">Methyltransferase</keyword>
<keyword id="KW-1185">Reference proteome</keyword>
<keyword id="KW-0949">S-adenosyl-L-methionine</keyword>
<keyword id="KW-0808">Transferase</keyword>
<keyword id="KW-0819">tRNA processing</keyword>
<accession>Q3B4A1</accession>
<dbReference type="EC" id="2.1.1.228" evidence="1"/>
<dbReference type="EMBL" id="CP000096">
    <property type="protein sequence ID" value="ABB23830.1"/>
    <property type="molecule type" value="Genomic_DNA"/>
</dbReference>
<dbReference type="RefSeq" id="WP_011357704.1">
    <property type="nucleotide sequence ID" value="NC_007512.1"/>
</dbReference>
<dbReference type="SMR" id="Q3B4A1"/>
<dbReference type="STRING" id="319225.Plut_0968"/>
<dbReference type="KEGG" id="plt:Plut_0968"/>
<dbReference type="eggNOG" id="COG0336">
    <property type="taxonomic scope" value="Bacteria"/>
</dbReference>
<dbReference type="HOGENOM" id="CLU_047363_0_1_10"/>
<dbReference type="OrthoDB" id="9807416at2"/>
<dbReference type="Proteomes" id="UP000002709">
    <property type="component" value="Chromosome"/>
</dbReference>
<dbReference type="GO" id="GO:0005829">
    <property type="term" value="C:cytosol"/>
    <property type="evidence" value="ECO:0007669"/>
    <property type="project" value="TreeGrafter"/>
</dbReference>
<dbReference type="GO" id="GO:0052906">
    <property type="term" value="F:tRNA (guanine(37)-N1)-methyltransferase activity"/>
    <property type="evidence" value="ECO:0007669"/>
    <property type="project" value="UniProtKB-UniRule"/>
</dbReference>
<dbReference type="GO" id="GO:0002939">
    <property type="term" value="P:tRNA N1-guanine methylation"/>
    <property type="evidence" value="ECO:0007669"/>
    <property type="project" value="TreeGrafter"/>
</dbReference>
<dbReference type="CDD" id="cd18080">
    <property type="entry name" value="TrmD-like"/>
    <property type="match status" value="1"/>
</dbReference>
<dbReference type="Gene3D" id="3.40.1280.10">
    <property type="match status" value="1"/>
</dbReference>
<dbReference type="Gene3D" id="1.10.1270.20">
    <property type="entry name" value="tRNA(m1g37)methyltransferase, domain 2"/>
    <property type="match status" value="1"/>
</dbReference>
<dbReference type="HAMAP" id="MF_00605">
    <property type="entry name" value="TrmD"/>
    <property type="match status" value="1"/>
</dbReference>
<dbReference type="InterPro" id="IPR029028">
    <property type="entry name" value="Alpha/beta_knot_MTases"/>
</dbReference>
<dbReference type="InterPro" id="IPR023148">
    <property type="entry name" value="tRNA_m1G_MeTrfase_C_sf"/>
</dbReference>
<dbReference type="InterPro" id="IPR002649">
    <property type="entry name" value="tRNA_m1G_MeTrfase_TrmD"/>
</dbReference>
<dbReference type="InterPro" id="IPR029026">
    <property type="entry name" value="tRNA_m1G_MTases_N"/>
</dbReference>
<dbReference type="InterPro" id="IPR016009">
    <property type="entry name" value="tRNA_MeTrfase_TRMD/TRM10"/>
</dbReference>
<dbReference type="NCBIfam" id="NF000648">
    <property type="entry name" value="PRK00026.1"/>
    <property type="match status" value="1"/>
</dbReference>
<dbReference type="NCBIfam" id="TIGR00088">
    <property type="entry name" value="trmD"/>
    <property type="match status" value="1"/>
</dbReference>
<dbReference type="PANTHER" id="PTHR46417">
    <property type="entry name" value="TRNA (GUANINE-N(1)-)-METHYLTRANSFERASE"/>
    <property type="match status" value="1"/>
</dbReference>
<dbReference type="PANTHER" id="PTHR46417:SF1">
    <property type="entry name" value="TRNA (GUANINE-N(1)-)-METHYLTRANSFERASE"/>
    <property type="match status" value="1"/>
</dbReference>
<dbReference type="Pfam" id="PF01746">
    <property type="entry name" value="tRNA_m1G_MT"/>
    <property type="match status" value="1"/>
</dbReference>
<dbReference type="PIRSF" id="PIRSF000386">
    <property type="entry name" value="tRNA_mtase"/>
    <property type="match status" value="1"/>
</dbReference>
<dbReference type="SUPFAM" id="SSF75217">
    <property type="entry name" value="alpha/beta knot"/>
    <property type="match status" value="1"/>
</dbReference>